<gene>
    <name type="ORF">CPIJ003941</name>
</gene>
<keyword id="KW-0963">Cytoplasm</keyword>
<keyword id="KW-0479">Metal-binding</keyword>
<keyword id="KW-1185">Reference proteome</keyword>
<keyword id="KW-0819">tRNA processing</keyword>
<keyword id="KW-0862">Zinc</keyword>
<protein>
    <recommendedName>
        <fullName evidence="1">Queuine tRNA-ribosyltransferase accessory subunit 2</fullName>
    </recommendedName>
    <alternativeName>
        <fullName evidence="1">Queuine tRNA-ribosyltransferase domain-containing protein 1</fullName>
    </alternativeName>
</protein>
<evidence type="ECO:0000255" key="1">
    <source>
        <dbReference type="HAMAP-Rule" id="MF_03043"/>
    </source>
</evidence>
<feature type="chain" id="PRO_0000383932" description="Queuine tRNA-ribosyltransferase accessory subunit 2">
    <location>
        <begin position="1"/>
        <end position="429"/>
    </location>
</feature>
<feature type="binding site" evidence="1">
    <location>
        <position position="330"/>
    </location>
    <ligand>
        <name>Zn(2+)</name>
        <dbReference type="ChEBI" id="CHEBI:29105"/>
    </ligand>
</feature>
<feature type="binding site" evidence="1">
    <location>
        <position position="332"/>
    </location>
    <ligand>
        <name>Zn(2+)</name>
        <dbReference type="ChEBI" id="CHEBI:29105"/>
    </ligand>
</feature>
<feature type="binding site" evidence="1">
    <location>
        <position position="335"/>
    </location>
    <ligand>
        <name>Zn(2+)</name>
        <dbReference type="ChEBI" id="CHEBI:29105"/>
    </ligand>
</feature>
<feature type="binding site" evidence="1">
    <location>
        <position position="361"/>
    </location>
    <ligand>
        <name>Zn(2+)</name>
        <dbReference type="ChEBI" id="CHEBI:29105"/>
    </ligand>
</feature>
<proteinExistence type="inferred from homology"/>
<organism>
    <name type="scientific">Culex quinquefasciatus</name>
    <name type="common">Southern house mosquito</name>
    <name type="synonym">Culex pungens</name>
    <dbReference type="NCBI Taxonomy" id="7176"/>
    <lineage>
        <taxon>Eukaryota</taxon>
        <taxon>Metazoa</taxon>
        <taxon>Ecdysozoa</taxon>
        <taxon>Arthropoda</taxon>
        <taxon>Hexapoda</taxon>
        <taxon>Insecta</taxon>
        <taxon>Pterygota</taxon>
        <taxon>Neoptera</taxon>
        <taxon>Endopterygota</taxon>
        <taxon>Diptera</taxon>
        <taxon>Nematocera</taxon>
        <taxon>Culicoidea</taxon>
        <taxon>Culicidae</taxon>
        <taxon>Culicinae</taxon>
        <taxon>Culicini</taxon>
        <taxon>Culex</taxon>
        <taxon>Culex</taxon>
    </lineage>
</organism>
<comment type="function">
    <text evidence="1">Non-catalytic subunit of the queuine tRNA-ribosyltransferase (TGT) that catalyzes the base-exchange of a guanine (G) residue with queuine (Q) at position 34 (anticodon wobble position) in tRNAs with GU(N) anticodons (tRNA-Asp, -Asn, -His and -Tyr), resulting in the hypermodified nucleoside queuosine (7-(((4,5-cis-dihydroxy-2-cyclopenten-1-yl)amino)methyl)-7-deazaguanosine).</text>
</comment>
<comment type="cofactor">
    <cofactor evidence="1">
        <name>Zn(2+)</name>
        <dbReference type="ChEBI" id="CHEBI:29105"/>
    </cofactor>
    <text evidence="1">Binds 1 zinc ion per subunit.</text>
</comment>
<comment type="subunit">
    <text evidence="1">Heterodimer of a catalytic subunit and an accessory subunit.</text>
</comment>
<comment type="subcellular location">
    <subcellularLocation>
        <location evidence="1">Cytoplasm</location>
    </subcellularLocation>
</comment>
<comment type="similarity">
    <text evidence="1">Belongs to the queuine tRNA-ribosyltransferase family. QTRT2 subfamily.</text>
</comment>
<reference key="1">
    <citation type="submission" date="2007-03" db="EMBL/GenBank/DDBJ databases">
        <title>Annotation of Culex pipiens quinquefasciatus.</title>
        <authorList>
            <consortium name="The Broad Institute Genome Sequencing Platform"/>
            <person name="Atkinson P.W."/>
            <person name="Hemingway J."/>
            <person name="Christensen B.M."/>
            <person name="Higgs S."/>
            <person name="Kodira C.D."/>
            <person name="Hannick L.I."/>
            <person name="Megy K."/>
            <person name="O'Leary S.B."/>
            <person name="Pearson M."/>
            <person name="Haas B.J."/>
            <person name="Mauceli E."/>
            <person name="Wortman J.R."/>
            <person name="Lee N.H."/>
            <person name="Guigo R."/>
            <person name="Stanke M."/>
            <person name="Alvarado L."/>
            <person name="Amedeo P."/>
            <person name="Antoine C.H."/>
            <person name="Arensburger P."/>
            <person name="Bidwell S.L."/>
            <person name="Crawford M."/>
            <person name="Camaro F."/>
            <person name="Devon K."/>
            <person name="Engels R."/>
            <person name="Hammond M."/>
            <person name="Howarth C."/>
            <person name="Koehrsen M."/>
            <person name="Lawson D."/>
            <person name="Montgomery P."/>
            <person name="Nene V."/>
            <person name="Nusbaum C."/>
            <person name="Puiu D."/>
            <person name="Romero-Severson J."/>
            <person name="Severson D.W."/>
            <person name="Shumway M."/>
            <person name="Sisk P."/>
            <person name="Stolte C."/>
            <person name="Zeng Q."/>
            <person name="Eisenstadt E."/>
            <person name="Fraser-Liggett C.M."/>
            <person name="Strausberg R."/>
            <person name="Galagan J."/>
            <person name="Birren B."/>
            <person name="Collins F.H."/>
        </authorList>
    </citation>
    <scope>NUCLEOTIDE SEQUENCE [LARGE SCALE GENOMIC DNA]</scope>
    <source>
        <strain>JHB</strain>
    </source>
</reference>
<name>QTRT2_CULQU</name>
<sequence length="429" mass="47602">MKFVLETVSKCSGRLGSLSGVDRLASSAKFQTPTLVLHTKGGSVPHLSKEVLHYLTGAEPQLMQYSLNGTVHMEEAVRGCGDGLSGFVAQKESVSLLVLRDPAEPCQPGYHEKDVVPVFGRSGRKNFTAESYMSLVEAFRPDVYVPLFDGDTDGGSSKKREQRSQERTETFVEQCLEVHRKSEKLKGASVLGPIVGGYNKKLREKSVQFVERLKDDFAGYFIAGLHSYGSSASEVKEAPLLDIVSSVCQQLPLEKPKFLFGAFTPQLVLELVVRGVDIFDTSYPYLKTQQNRALNFSFDTSDSNVVARKNELDLTDACWAEDFTGFVDGCQCLACTKHTKAYTHHLYNTREMLAPILLMIHNLHHYFEFFKAIRRHVAQDTVGELIAHINKHVVLPVTDGVVKEPGKSLDGVELKESASVQVEAKRVKV</sequence>
<accession>B0WAN0</accession>
<dbReference type="EMBL" id="DS231873">
    <property type="protein sequence ID" value="EDS41584.1"/>
    <property type="molecule type" value="Genomic_DNA"/>
</dbReference>
<dbReference type="RefSeq" id="XP_001845764.1">
    <property type="nucleotide sequence ID" value="XM_001845712.1"/>
</dbReference>
<dbReference type="SMR" id="B0WAN0"/>
<dbReference type="FunCoup" id="B0WAN0">
    <property type="interactions" value="1508"/>
</dbReference>
<dbReference type="STRING" id="7176.B0WAN0"/>
<dbReference type="EnsemblMetazoa" id="CPIJ003941-RA">
    <property type="protein sequence ID" value="CPIJ003941-PA"/>
    <property type="gene ID" value="CPIJ003941"/>
</dbReference>
<dbReference type="KEGG" id="cqu:CpipJ_CPIJ003941"/>
<dbReference type="VEuPathDB" id="VectorBase:CPIJ003941"/>
<dbReference type="VEuPathDB" id="VectorBase:CQUJHB017870"/>
<dbReference type="eggNOG" id="KOG3909">
    <property type="taxonomic scope" value="Eukaryota"/>
</dbReference>
<dbReference type="HOGENOM" id="CLU_037350_0_0_1"/>
<dbReference type="InParanoid" id="B0WAN0"/>
<dbReference type="OMA" id="MAGSRMK"/>
<dbReference type="OrthoDB" id="27601at2759"/>
<dbReference type="PhylomeDB" id="B0WAN0"/>
<dbReference type="Proteomes" id="UP000002320">
    <property type="component" value="Unassembled WGS sequence"/>
</dbReference>
<dbReference type="GO" id="GO:0005737">
    <property type="term" value="C:cytoplasm"/>
    <property type="evidence" value="ECO:0007669"/>
    <property type="project" value="UniProtKB-SubCell"/>
</dbReference>
<dbReference type="GO" id="GO:0046872">
    <property type="term" value="F:metal ion binding"/>
    <property type="evidence" value="ECO:0007669"/>
    <property type="project" value="UniProtKB-KW"/>
</dbReference>
<dbReference type="GO" id="GO:0008479">
    <property type="term" value="F:tRNA-guanosine(34) queuine transglycosylase activity"/>
    <property type="evidence" value="ECO:0007669"/>
    <property type="project" value="UniProtKB-UniRule"/>
</dbReference>
<dbReference type="GO" id="GO:0101030">
    <property type="term" value="P:tRNA-guanine transglycosylation"/>
    <property type="evidence" value="ECO:0007669"/>
    <property type="project" value="UniProtKB-UniRule"/>
</dbReference>
<dbReference type="Gene3D" id="3.20.20.105">
    <property type="entry name" value="Queuine tRNA-ribosyltransferase-like"/>
    <property type="match status" value="1"/>
</dbReference>
<dbReference type="HAMAP" id="MF_03043">
    <property type="entry name" value="QTRT2"/>
    <property type="match status" value="1"/>
</dbReference>
<dbReference type="InterPro" id="IPR028592">
    <property type="entry name" value="QTRTD1"/>
</dbReference>
<dbReference type="InterPro" id="IPR050852">
    <property type="entry name" value="Queuine_tRNA-ribosyltrfase"/>
</dbReference>
<dbReference type="InterPro" id="IPR036511">
    <property type="entry name" value="TGT-like_sf"/>
</dbReference>
<dbReference type="InterPro" id="IPR002616">
    <property type="entry name" value="tRNA_ribo_trans-like"/>
</dbReference>
<dbReference type="NCBIfam" id="TIGR00449">
    <property type="entry name" value="tgt_general"/>
    <property type="match status" value="1"/>
</dbReference>
<dbReference type="PANTHER" id="PTHR46064">
    <property type="entry name" value="QUEUINE TRNA-RIBOSYLTRANSFERASE ACCESSORY SUBUNIT 2"/>
    <property type="match status" value="1"/>
</dbReference>
<dbReference type="PANTHER" id="PTHR46064:SF1">
    <property type="entry name" value="QUEUINE TRNA-RIBOSYLTRANSFERASE ACCESSORY SUBUNIT 2"/>
    <property type="match status" value="1"/>
</dbReference>
<dbReference type="Pfam" id="PF01702">
    <property type="entry name" value="TGT"/>
    <property type="match status" value="1"/>
</dbReference>
<dbReference type="SUPFAM" id="SSF51713">
    <property type="entry name" value="tRNA-guanine transglycosylase"/>
    <property type="match status" value="1"/>
</dbReference>